<protein>
    <recommendedName>
        <fullName evidence="7">DEK domain-containing chromatin-associated protein 2</fullName>
        <shortName evidence="8">At-DEK2</shortName>
        <shortName evidence="7">AtDEK-2</shortName>
        <shortName evidence="7">Protein DEK 2</shortName>
    </recommendedName>
</protein>
<feature type="chain" id="PRO_0000453265" description="DEK domain-containing chromatin-associated protein 2">
    <location>
        <begin position="1"/>
        <end position="530"/>
    </location>
</feature>
<feature type="domain" description="DEK-C" evidence="5">
    <location>
        <begin position="426"/>
        <end position="481"/>
    </location>
</feature>
<feature type="DNA-binding region" evidence="1">
    <location>
        <begin position="444"/>
        <end position="458"/>
    </location>
</feature>
<feature type="DNA-binding region" evidence="1">
    <location>
        <begin position="473"/>
        <end position="477"/>
    </location>
</feature>
<feature type="region of interest" description="Disordered" evidence="6">
    <location>
        <begin position="1"/>
        <end position="130"/>
    </location>
</feature>
<feature type="region of interest" description="Disordered" evidence="6">
    <location>
        <begin position="246"/>
        <end position="430"/>
    </location>
</feature>
<feature type="region of interest" description="Disordered" evidence="6">
    <location>
        <begin position="482"/>
        <end position="530"/>
    </location>
</feature>
<feature type="coiled-coil region" evidence="3">
    <location>
        <begin position="41"/>
        <end position="61"/>
    </location>
</feature>
<feature type="coiled-coil region" evidence="3">
    <location>
        <begin position="185"/>
        <end position="205"/>
    </location>
</feature>
<feature type="coiled-coil region" evidence="3">
    <location>
        <begin position="492"/>
        <end position="527"/>
    </location>
</feature>
<feature type="short sequence motif" description="Nuclear localization signal 1" evidence="4">
    <location>
        <begin position="260"/>
        <end position="267"/>
    </location>
</feature>
<feature type="short sequence motif" description="Nuclear localization signal 2" evidence="4">
    <location>
        <begin position="343"/>
        <end position="350"/>
    </location>
</feature>
<feature type="short sequence motif" description="Nuclear localization signal 3" evidence="4">
    <location>
        <begin position="384"/>
        <end position="391"/>
    </location>
</feature>
<feature type="compositionally biased region" description="Basic and acidic residues" evidence="6">
    <location>
        <begin position="1"/>
        <end position="47"/>
    </location>
</feature>
<feature type="compositionally biased region" description="Basic and acidic residues" evidence="6">
    <location>
        <begin position="57"/>
        <end position="68"/>
    </location>
</feature>
<feature type="compositionally biased region" description="Acidic residues" evidence="6">
    <location>
        <begin position="69"/>
        <end position="82"/>
    </location>
</feature>
<feature type="compositionally biased region" description="Basic and acidic residues" evidence="6">
    <location>
        <begin position="83"/>
        <end position="93"/>
    </location>
</feature>
<feature type="compositionally biased region" description="Basic and acidic residues" evidence="6">
    <location>
        <begin position="100"/>
        <end position="110"/>
    </location>
</feature>
<feature type="compositionally biased region" description="Basic residues" evidence="6">
    <location>
        <begin position="253"/>
        <end position="263"/>
    </location>
</feature>
<feature type="compositionally biased region" description="Acidic residues" evidence="6">
    <location>
        <begin position="286"/>
        <end position="332"/>
    </location>
</feature>
<feature type="compositionally biased region" description="Polar residues" evidence="6">
    <location>
        <begin position="374"/>
        <end position="384"/>
    </location>
</feature>
<feature type="compositionally biased region" description="Basic and acidic residues" evidence="6">
    <location>
        <begin position="387"/>
        <end position="397"/>
    </location>
</feature>
<feature type="compositionally biased region" description="Acidic residues" evidence="6">
    <location>
        <begin position="484"/>
        <end position="497"/>
    </location>
</feature>
<feature type="compositionally biased region" description="Basic and acidic residues" evidence="6">
    <location>
        <begin position="516"/>
        <end position="530"/>
    </location>
</feature>
<feature type="splice variant" id="VSP_061115" description="In isoform 2." evidence="8">
    <original>K</original>
    <variation>KQ</variation>
    <location>
        <position position="252"/>
    </location>
</feature>
<keyword id="KW-0025">Alternative splicing</keyword>
<keyword id="KW-0156">Chromatin regulator</keyword>
<keyword id="KW-0175">Coiled coil</keyword>
<keyword id="KW-0238">DNA-binding</keyword>
<keyword id="KW-0539">Nucleus</keyword>
<keyword id="KW-1185">Reference proteome</keyword>
<keyword id="KW-0804">Transcription</keyword>
<keyword id="KW-0805">Transcription regulation</keyword>
<sequence length="530" mass="59428">MATETLDEKTPEVNSPAKEEIDVVPKEEKEVEKEKVDSPRIGEAEEEKKEDEEEGEAKEGELGEKDKEDDVESEEEEEEEEGSGSKKSSEKETVTPTSERPTRERKKVERFSLSTPMRAPPSKSVSIEKGRGTPLREIPNVAHKLSKRKADDNLMLLHTILFGKKAKAQMVKRNIGQFSGFAWSEKEEEKQRARIKEKIDKCVKEKLIVFCDVLDIPISRSNVKKEELAVKVLEFLESPKETRDVIIADQEKAKKRKSTPKRGKSGESSDTPAKRKRQTKKRDLPSDTEEGKDEGDADSEGTNDPHEEDDAAPEEESDHEKTDTDDEKDEVEVEKPSKKKSSSKKTVEESSGSKGKDKQPSAKGSARSGEKSSKQIAKSTSSPAKKQKVDHVESSKEKSKKQPSKPQAKGSKEKGKATKKGKAKAEPTRKEMLEVVSKILKEVDFNTATLSDILQKLSDHFGVELSHRKPEVKDVITEAINAMTDDEEEDEEEEAEAGSDKEKEEVKGEEEEEKAEAESDKEKEKEEPKD</sequence>
<accession>Q84JB7</accession>
<accession>Q9FFQ8</accession>
<gene>
    <name evidence="7" type="primary">DEK2</name>
    <name evidence="9" type="ordered locus">At5g63550</name>
    <name evidence="10" type="ORF">MLE2.18</name>
</gene>
<dbReference type="EMBL" id="AB005234">
    <property type="protein sequence ID" value="BAB10448.1"/>
    <property type="molecule type" value="Genomic_DNA"/>
</dbReference>
<dbReference type="EMBL" id="AB007649">
    <property type="protein sequence ID" value="BAB10448.1"/>
    <property type="status" value="JOINED"/>
    <property type="molecule type" value="Genomic_DNA"/>
</dbReference>
<dbReference type="EMBL" id="CP002688">
    <property type="protein sequence ID" value="AED97767.1"/>
    <property type="molecule type" value="Genomic_DNA"/>
</dbReference>
<dbReference type="EMBL" id="CP002688">
    <property type="protein sequence ID" value="AED97768.1"/>
    <property type="molecule type" value="Genomic_DNA"/>
</dbReference>
<dbReference type="EMBL" id="BT004149">
    <property type="protein sequence ID" value="AAO42170.1"/>
    <property type="molecule type" value="mRNA"/>
</dbReference>
<dbReference type="EMBL" id="BT005478">
    <property type="protein sequence ID" value="AAO63898.1"/>
    <property type="molecule type" value="mRNA"/>
</dbReference>
<dbReference type="RefSeq" id="NP_001154794.1">
    <molecule id="Q84JB7-2"/>
    <property type="nucleotide sequence ID" value="NM_001161322.2"/>
</dbReference>
<dbReference type="RefSeq" id="NP_201160.2">
    <molecule id="Q84JB7-1"/>
    <property type="nucleotide sequence ID" value="NM_125750.6"/>
</dbReference>
<dbReference type="SMR" id="Q84JB7"/>
<dbReference type="FunCoup" id="Q84JB7">
    <property type="interactions" value="422"/>
</dbReference>
<dbReference type="STRING" id="3702.Q9FFQ8"/>
<dbReference type="iPTMnet" id="Q84JB7"/>
<dbReference type="PaxDb" id="3702-AT5G63550.2"/>
<dbReference type="ProteomicsDB" id="187843"/>
<dbReference type="ProteomicsDB" id="187893"/>
<dbReference type="EnsemblPlants" id="AT5G63550.1">
    <molecule id="Q84JB7-1"/>
    <property type="protein sequence ID" value="AT5G63550.1"/>
    <property type="gene ID" value="AT5G63550"/>
</dbReference>
<dbReference type="EnsemblPlants" id="AT5G63550.2">
    <molecule id="Q84JB7-2"/>
    <property type="protein sequence ID" value="AT5G63550.2"/>
    <property type="gene ID" value="AT5G63550"/>
</dbReference>
<dbReference type="GeneID" id="836474"/>
<dbReference type="Gramene" id="AT5G63550.1">
    <molecule id="Q84JB7-1"/>
    <property type="protein sequence ID" value="AT5G63550.1"/>
    <property type="gene ID" value="AT5G63550"/>
</dbReference>
<dbReference type="Gramene" id="AT5G63550.2">
    <molecule id="Q84JB7-2"/>
    <property type="protein sequence ID" value="AT5G63550.2"/>
    <property type="gene ID" value="AT5G63550"/>
</dbReference>
<dbReference type="KEGG" id="ath:AT5G63550"/>
<dbReference type="Araport" id="AT5G63550"/>
<dbReference type="TAIR" id="AT5G63550"/>
<dbReference type="eggNOG" id="KOG2266">
    <property type="taxonomic scope" value="Eukaryota"/>
</dbReference>
<dbReference type="HOGENOM" id="CLU_011980_2_0_1"/>
<dbReference type="InParanoid" id="Q84JB7"/>
<dbReference type="OMA" id="FQQKNMK"/>
<dbReference type="OrthoDB" id="370884at2759"/>
<dbReference type="PhylomeDB" id="Q84JB7"/>
<dbReference type="CD-CODE" id="4299E36E">
    <property type="entry name" value="Nucleolus"/>
</dbReference>
<dbReference type="PRO" id="PR:Q84JB7"/>
<dbReference type="Proteomes" id="UP000006548">
    <property type="component" value="Chromosome 5"/>
</dbReference>
<dbReference type="ExpressionAtlas" id="Q84JB7">
    <property type="expression patterns" value="baseline and differential"/>
</dbReference>
<dbReference type="GO" id="GO:0005730">
    <property type="term" value="C:nucleolus"/>
    <property type="evidence" value="ECO:0000250"/>
    <property type="project" value="UniProtKB"/>
</dbReference>
<dbReference type="GO" id="GO:0005634">
    <property type="term" value="C:nucleus"/>
    <property type="evidence" value="ECO:0000250"/>
    <property type="project" value="UniProtKB"/>
</dbReference>
<dbReference type="GO" id="GO:0003682">
    <property type="term" value="F:chromatin binding"/>
    <property type="evidence" value="ECO:0000250"/>
    <property type="project" value="UniProtKB"/>
</dbReference>
<dbReference type="GO" id="GO:0003677">
    <property type="term" value="F:DNA binding"/>
    <property type="evidence" value="ECO:0007669"/>
    <property type="project" value="UniProtKB-KW"/>
</dbReference>
<dbReference type="GO" id="GO:0042393">
    <property type="term" value="F:histone binding"/>
    <property type="evidence" value="ECO:0000250"/>
    <property type="project" value="UniProtKB"/>
</dbReference>
<dbReference type="GO" id="GO:0006338">
    <property type="term" value="P:chromatin remodeling"/>
    <property type="evidence" value="ECO:0000250"/>
    <property type="project" value="UniProtKB"/>
</dbReference>
<dbReference type="GO" id="GO:0045892">
    <property type="term" value="P:negative regulation of DNA-templated transcription"/>
    <property type="evidence" value="ECO:0000250"/>
    <property type="project" value="UniProtKB"/>
</dbReference>
<dbReference type="GO" id="GO:0006355">
    <property type="term" value="P:regulation of DNA-templated transcription"/>
    <property type="evidence" value="ECO:0000250"/>
    <property type="project" value="UniProtKB"/>
</dbReference>
<dbReference type="FunFam" id="1.10.10.60:FF:000220">
    <property type="entry name" value="DEK domain-containing chromatin associated protein"/>
    <property type="match status" value="1"/>
</dbReference>
<dbReference type="Gene3D" id="1.10.10.60">
    <property type="entry name" value="Homeodomain-like"/>
    <property type="match status" value="1"/>
</dbReference>
<dbReference type="InterPro" id="IPR044198">
    <property type="entry name" value="DEK"/>
</dbReference>
<dbReference type="InterPro" id="IPR014876">
    <property type="entry name" value="DEK_C"/>
</dbReference>
<dbReference type="PANTHER" id="PTHR13468:SF10">
    <property type="entry name" value="DEK DOMAIN-CONTAINING CHROMATIN-ASSOCIATED PROTEIN 2"/>
    <property type="match status" value="1"/>
</dbReference>
<dbReference type="PANTHER" id="PTHR13468">
    <property type="entry name" value="DEK PROTEIN"/>
    <property type="match status" value="1"/>
</dbReference>
<dbReference type="Pfam" id="PF08766">
    <property type="entry name" value="DEK_C"/>
    <property type="match status" value="1"/>
</dbReference>
<dbReference type="SUPFAM" id="SSF109715">
    <property type="entry name" value="DEK C-terminal domain"/>
    <property type="match status" value="1"/>
</dbReference>
<dbReference type="PROSITE" id="PS51998">
    <property type="entry name" value="DEK_C"/>
    <property type="match status" value="1"/>
</dbReference>
<reference key="1">
    <citation type="journal article" date="1997" name="DNA Res.">
        <title>Structural analysis of Arabidopsis thaliana chromosome 5. I. Sequence features of the 1.6 Mb regions covered by twenty physically assigned P1 clones.</title>
        <authorList>
            <person name="Sato S."/>
            <person name="Kotani H."/>
            <person name="Nakamura Y."/>
            <person name="Kaneko T."/>
            <person name="Asamizu E."/>
            <person name="Fukami M."/>
            <person name="Miyajima N."/>
            <person name="Tabata S."/>
        </authorList>
    </citation>
    <scope>NUCLEOTIDE SEQUENCE [LARGE SCALE GENOMIC DNA]</scope>
    <source>
        <strain>cv. Columbia</strain>
    </source>
</reference>
<reference key="2">
    <citation type="journal article" date="1997" name="DNA Res.">
        <title>Structural analysis of Arabidopsis thaliana chromosome 5. III. Sequence features of the regions of 1,191,918 bp covered by seventeen physically assigned P1 clones.</title>
        <authorList>
            <person name="Nakamura Y."/>
            <person name="Sato S."/>
            <person name="Kaneko T."/>
            <person name="Kotani H."/>
            <person name="Asamizu E."/>
            <person name="Miyajima N."/>
            <person name="Tabata S."/>
        </authorList>
    </citation>
    <scope>NUCLEOTIDE SEQUENCE [LARGE SCALE GENOMIC DNA]</scope>
    <source>
        <strain>cv. Columbia</strain>
    </source>
</reference>
<reference key="3">
    <citation type="journal article" date="2017" name="Plant J.">
        <title>Araport11: a complete reannotation of the Arabidopsis thaliana reference genome.</title>
        <authorList>
            <person name="Cheng C.Y."/>
            <person name="Krishnakumar V."/>
            <person name="Chan A.P."/>
            <person name="Thibaud-Nissen F."/>
            <person name="Schobel S."/>
            <person name="Town C.D."/>
        </authorList>
    </citation>
    <scope>GENOME REANNOTATION</scope>
    <source>
        <strain>cv. Columbia</strain>
    </source>
</reference>
<reference key="4">
    <citation type="journal article" date="2003" name="Science">
        <title>Empirical analysis of transcriptional activity in the Arabidopsis genome.</title>
        <authorList>
            <person name="Yamada K."/>
            <person name="Lim J."/>
            <person name="Dale J.M."/>
            <person name="Chen H."/>
            <person name="Shinn P."/>
            <person name="Palm C.J."/>
            <person name="Southwick A.M."/>
            <person name="Wu H.C."/>
            <person name="Kim C.J."/>
            <person name="Nguyen M."/>
            <person name="Pham P.K."/>
            <person name="Cheuk R.F."/>
            <person name="Karlin-Newmann G."/>
            <person name="Liu S.X."/>
            <person name="Lam B."/>
            <person name="Sakano H."/>
            <person name="Wu T."/>
            <person name="Yu G."/>
            <person name="Miranda M."/>
            <person name="Quach H.L."/>
            <person name="Tripp M."/>
            <person name="Chang C.H."/>
            <person name="Lee J.M."/>
            <person name="Toriumi M.J."/>
            <person name="Chan M.M."/>
            <person name="Tang C.C."/>
            <person name="Onodera C.S."/>
            <person name="Deng J.M."/>
            <person name="Akiyama K."/>
            <person name="Ansari Y."/>
            <person name="Arakawa T."/>
            <person name="Banh J."/>
            <person name="Banno F."/>
            <person name="Bowser L."/>
            <person name="Brooks S.Y."/>
            <person name="Carninci P."/>
            <person name="Chao Q."/>
            <person name="Choy N."/>
            <person name="Enju A."/>
            <person name="Goldsmith A.D."/>
            <person name="Gurjal M."/>
            <person name="Hansen N.F."/>
            <person name="Hayashizaki Y."/>
            <person name="Johnson-Hopson C."/>
            <person name="Hsuan V.W."/>
            <person name="Iida K."/>
            <person name="Karnes M."/>
            <person name="Khan S."/>
            <person name="Koesema E."/>
            <person name="Ishida J."/>
            <person name="Jiang P.X."/>
            <person name="Jones T."/>
            <person name="Kawai J."/>
            <person name="Kamiya A."/>
            <person name="Meyers C."/>
            <person name="Nakajima M."/>
            <person name="Narusaka M."/>
            <person name="Seki M."/>
            <person name="Sakurai T."/>
            <person name="Satou M."/>
            <person name="Tamse R."/>
            <person name="Vaysberg M."/>
            <person name="Wallender E.K."/>
            <person name="Wong C."/>
            <person name="Yamamura Y."/>
            <person name="Yuan S."/>
            <person name="Shinozaki K."/>
            <person name="Davis R.W."/>
            <person name="Theologis A."/>
            <person name="Ecker J.R."/>
        </authorList>
    </citation>
    <scope>NUCLEOTIDE SEQUENCE [LARGE SCALE MRNA] (ISOFORM 1)</scope>
    <source>
        <strain>cv. Columbia</strain>
    </source>
</reference>
<reference key="5">
    <citation type="journal article" date="2005" name="Mol. Biol. Cell">
        <title>Proteomic analysis of the Arabidopsis nucleolus suggests novel nucleolar functions.</title>
        <authorList>
            <person name="Pendle A.F."/>
            <person name="Clark G.P."/>
            <person name="Boon R."/>
            <person name="Lewandowska D."/>
            <person name="Lam Y.W."/>
            <person name="Andersen J."/>
            <person name="Mann M."/>
            <person name="Lamond A.I."/>
            <person name="Brown J.W."/>
            <person name="Shaw P.J."/>
        </authorList>
    </citation>
    <scope>GENE FAMILY</scope>
    <scope>NOMENCLATURE</scope>
</reference>
<reference key="6">
    <citation type="journal article" date="2009" name="J. Proteomics">
        <title>Phosphoproteomic analysis of nuclei-enriched fractions from Arabidopsis thaliana.</title>
        <authorList>
            <person name="Jones A.M.E."/>
            <person name="MacLean D."/>
            <person name="Studholme D.J."/>
            <person name="Serna-Sanz A."/>
            <person name="Andreasson E."/>
            <person name="Rathjen J.P."/>
            <person name="Peck S.C."/>
        </authorList>
    </citation>
    <scope>IDENTIFICATION BY MASS SPECTROMETRY [LARGE SCALE ANALYSIS]</scope>
</reference>
<reference key="7">
    <citation type="journal article" date="2009" name="Plant Physiol.">
        <title>Large-scale Arabidopsis phosphoproteome profiling reveals novel chloroplast kinase substrates and phosphorylation networks.</title>
        <authorList>
            <person name="Reiland S."/>
            <person name="Messerli G."/>
            <person name="Baerenfaller K."/>
            <person name="Gerrits B."/>
            <person name="Endler A."/>
            <person name="Grossmann J."/>
            <person name="Gruissem W."/>
            <person name="Baginsky S."/>
        </authorList>
    </citation>
    <scope>IDENTIFICATION BY MASS SPECTROMETRY [LARGE SCALE ANALYSIS]</scope>
</reference>
<reference key="8">
    <citation type="journal article" date="2012" name="Mol. Cell. Proteomics">
        <title>Comparative large-scale characterisation of plant vs. mammal proteins reveals similar and idiosyncratic N-alpha acetylation features.</title>
        <authorList>
            <person name="Bienvenut W.V."/>
            <person name="Sumpton D."/>
            <person name="Martinez A."/>
            <person name="Lilla S."/>
            <person name="Espagne C."/>
            <person name="Meinnel T."/>
            <person name="Giglione C."/>
        </authorList>
    </citation>
    <scope>IDENTIFICATION BY MASS SPECTROMETRY [LARGE SCALE ANALYSIS]</scope>
</reference>
<proteinExistence type="evidence at protein level"/>
<evidence type="ECO:0000250" key="1">
    <source>
        <dbReference type="UniProtKB" id="P35659"/>
    </source>
</evidence>
<evidence type="ECO:0000250" key="2">
    <source>
        <dbReference type="UniProtKB" id="Q9SUA1"/>
    </source>
</evidence>
<evidence type="ECO:0000255" key="3"/>
<evidence type="ECO:0000255" key="4">
    <source>
        <dbReference type="PROSITE-ProRule" id="PRU00768"/>
    </source>
</evidence>
<evidence type="ECO:0000255" key="5">
    <source>
        <dbReference type="PROSITE-ProRule" id="PRU01342"/>
    </source>
</evidence>
<evidence type="ECO:0000256" key="6">
    <source>
        <dbReference type="SAM" id="MobiDB-lite"/>
    </source>
</evidence>
<evidence type="ECO:0000303" key="7">
    <source>
    </source>
</evidence>
<evidence type="ECO:0000305" key="8"/>
<evidence type="ECO:0000312" key="9">
    <source>
        <dbReference type="Araport" id="AT5G63550"/>
    </source>
</evidence>
<evidence type="ECO:0000312" key="10">
    <source>
        <dbReference type="EMBL" id="BAB10448.1"/>
    </source>
</evidence>
<comment type="function">
    <text evidence="2">Chromatin-associated protein which contributes to the modulation of chromatin structure (such as super-helical structure of DNA) and function (By similarity). Binds to chromatin of protein-coding genes throughout the genome to regulate nucleosome occupancy and chromatin accessibility, and to modulate the expression of target genes (By similarity).</text>
</comment>
<comment type="subunit">
    <text evidence="2">Found in a mRNA splicing-dependent exon junction complex (EJC) (By similarity). Binds specifically histones H3 and H4 (By similarity).</text>
</comment>
<comment type="subcellular location">
    <subcellularLocation>
        <location evidence="4">Nucleus</location>
    </subcellularLocation>
    <subcellularLocation>
        <location evidence="2">Nucleus</location>
        <location evidence="2">Nucleolus</location>
    </subcellularLocation>
    <text evidence="1 2">Associates with chromatin (By similarity). Enriched in regions where chromatin is decondensed or sparse in the interphase nuclei (By similarity).</text>
</comment>
<comment type="alternative products">
    <event type="alternative splicing"/>
    <isoform>
        <id>Q84JB7-1</id>
        <name>1</name>
        <sequence type="displayed"/>
    </isoform>
    <isoform>
        <id>Q84JB7-2</id>
        <name>2</name>
        <sequence type="described" ref="VSP_061115"/>
    </isoform>
</comment>
<name>DEKP2_ARATH</name>
<organism>
    <name type="scientific">Arabidopsis thaliana</name>
    <name type="common">Mouse-ear cress</name>
    <dbReference type="NCBI Taxonomy" id="3702"/>
    <lineage>
        <taxon>Eukaryota</taxon>
        <taxon>Viridiplantae</taxon>
        <taxon>Streptophyta</taxon>
        <taxon>Embryophyta</taxon>
        <taxon>Tracheophyta</taxon>
        <taxon>Spermatophyta</taxon>
        <taxon>Magnoliopsida</taxon>
        <taxon>eudicotyledons</taxon>
        <taxon>Gunneridae</taxon>
        <taxon>Pentapetalae</taxon>
        <taxon>rosids</taxon>
        <taxon>malvids</taxon>
        <taxon>Brassicales</taxon>
        <taxon>Brassicaceae</taxon>
        <taxon>Camelineae</taxon>
        <taxon>Arabidopsis</taxon>
    </lineage>
</organism>